<evidence type="ECO:0000255" key="1">
    <source>
        <dbReference type="HAMAP-Rule" id="MF_00182"/>
    </source>
</evidence>
<proteinExistence type="inferred from homology"/>
<accession>B0VAE0</accession>
<dbReference type="EC" id="2.1.2.9" evidence="1"/>
<dbReference type="EMBL" id="CU459141">
    <property type="protein sequence ID" value="CAM85012.1"/>
    <property type="molecule type" value="Genomic_DNA"/>
</dbReference>
<dbReference type="RefSeq" id="WP_000691200.1">
    <property type="nucleotide sequence ID" value="NZ_JBDGFB010000004.1"/>
</dbReference>
<dbReference type="SMR" id="B0VAE0"/>
<dbReference type="EnsemblBacteria" id="CAM85012">
    <property type="protein sequence ID" value="CAM85012"/>
    <property type="gene ID" value="ABAYE0022"/>
</dbReference>
<dbReference type="KEGG" id="aby:ABAYE0022"/>
<dbReference type="HOGENOM" id="CLU_033347_1_2_6"/>
<dbReference type="GO" id="GO:0005829">
    <property type="term" value="C:cytosol"/>
    <property type="evidence" value="ECO:0007669"/>
    <property type="project" value="TreeGrafter"/>
</dbReference>
<dbReference type="GO" id="GO:0004479">
    <property type="term" value="F:methionyl-tRNA formyltransferase activity"/>
    <property type="evidence" value="ECO:0007669"/>
    <property type="project" value="UniProtKB-UniRule"/>
</dbReference>
<dbReference type="CDD" id="cd08646">
    <property type="entry name" value="FMT_core_Met-tRNA-FMT_N"/>
    <property type="match status" value="1"/>
</dbReference>
<dbReference type="CDD" id="cd08704">
    <property type="entry name" value="Met_tRNA_FMT_C"/>
    <property type="match status" value="1"/>
</dbReference>
<dbReference type="Gene3D" id="3.10.25.10">
    <property type="entry name" value="Formyl transferase, C-terminal domain"/>
    <property type="match status" value="1"/>
</dbReference>
<dbReference type="Gene3D" id="3.40.50.170">
    <property type="entry name" value="Formyl transferase, N-terminal domain"/>
    <property type="match status" value="1"/>
</dbReference>
<dbReference type="HAMAP" id="MF_00182">
    <property type="entry name" value="Formyl_trans"/>
    <property type="match status" value="1"/>
</dbReference>
<dbReference type="InterPro" id="IPR005794">
    <property type="entry name" value="Fmt"/>
</dbReference>
<dbReference type="InterPro" id="IPR005793">
    <property type="entry name" value="Formyl_trans_C"/>
</dbReference>
<dbReference type="InterPro" id="IPR037022">
    <property type="entry name" value="Formyl_trans_C_sf"/>
</dbReference>
<dbReference type="InterPro" id="IPR002376">
    <property type="entry name" value="Formyl_transf_N"/>
</dbReference>
<dbReference type="InterPro" id="IPR036477">
    <property type="entry name" value="Formyl_transf_N_sf"/>
</dbReference>
<dbReference type="InterPro" id="IPR011034">
    <property type="entry name" value="Formyl_transferase-like_C_sf"/>
</dbReference>
<dbReference type="InterPro" id="IPR044135">
    <property type="entry name" value="Met-tRNA-FMT_C"/>
</dbReference>
<dbReference type="InterPro" id="IPR041711">
    <property type="entry name" value="Met-tRNA-FMT_N"/>
</dbReference>
<dbReference type="NCBIfam" id="TIGR00460">
    <property type="entry name" value="fmt"/>
    <property type="match status" value="1"/>
</dbReference>
<dbReference type="PANTHER" id="PTHR11138">
    <property type="entry name" value="METHIONYL-TRNA FORMYLTRANSFERASE"/>
    <property type="match status" value="1"/>
</dbReference>
<dbReference type="PANTHER" id="PTHR11138:SF5">
    <property type="entry name" value="METHIONYL-TRNA FORMYLTRANSFERASE, MITOCHONDRIAL"/>
    <property type="match status" value="1"/>
</dbReference>
<dbReference type="Pfam" id="PF02911">
    <property type="entry name" value="Formyl_trans_C"/>
    <property type="match status" value="1"/>
</dbReference>
<dbReference type="Pfam" id="PF00551">
    <property type="entry name" value="Formyl_trans_N"/>
    <property type="match status" value="1"/>
</dbReference>
<dbReference type="SUPFAM" id="SSF50486">
    <property type="entry name" value="FMT C-terminal domain-like"/>
    <property type="match status" value="1"/>
</dbReference>
<dbReference type="SUPFAM" id="SSF53328">
    <property type="entry name" value="Formyltransferase"/>
    <property type="match status" value="1"/>
</dbReference>
<protein>
    <recommendedName>
        <fullName evidence="1">Methionyl-tRNA formyltransferase</fullName>
        <ecNumber evidence="1">2.1.2.9</ecNumber>
    </recommendedName>
</protein>
<reference key="1">
    <citation type="journal article" date="2008" name="PLoS ONE">
        <title>Comparative analysis of Acinetobacters: three genomes for three lifestyles.</title>
        <authorList>
            <person name="Vallenet D."/>
            <person name="Nordmann P."/>
            <person name="Barbe V."/>
            <person name="Poirel L."/>
            <person name="Mangenot S."/>
            <person name="Bataille E."/>
            <person name="Dossat C."/>
            <person name="Gas S."/>
            <person name="Kreimeyer A."/>
            <person name="Lenoble P."/>
            <person name="Oztas S."/>
            <person name="Poulain J."/>
            <person name="Segurens B."/>
            <person name="Robert C."/>
            <person name="Abergel C."/>
            <person name="Claverie J.-M."/>
            <person name="Raoult D."/>
            <person name="Medigue C."/>
            <person name="Weissenbach J."/>
            <person name="Cruveiller S."/>
        </authorList>
    </citation>
    <scope>NUCLEOTIDE SEQUENCE [LARGE SCALE GENOMIC DNA]</scope>
    <source>
        <strain>AYE</strain>
    </source>
</reference>
<organism>
    <name type="scientific">Acinetobacter baumannii (strain AYE)</name>
    <dbReference type="NCBI Taxonomy" id="509173"/>
    <lineage>
        <taxon>Bacteria</taxon>
        <taxon>Pseudomonadati</taxon>
        <taxon>Pseudomonadota</taxon>
        <taxon>Gammaproteobacteria</taxon>
        <taxon>Moraxellales</taxon>
        <taxon>Moraxellaceae</taxon>
        <taxon>Acinetobacter</taxon>
        <taxon>Acinetobacter calcoaceticus/baumannii complex</taxon>
    </lineage>
</organism>
<keyword id="KW-0648">Protein biosynthesis</keyword>
<keyword id="KW-0808">Transferase</keyword>
<feature type="chain" id="PRO_1000098370" description="Methionyl-tRNA formyltransferase">
    <location>
        <begin position="1"/>
        <end position="320"/>
    </location>
</feature>
<feature type="binding site" evidence="1">
    <location>
        <begin position="114"/>
        <end position="117"/>
    </location>
    <ligand>
        <name>(6S)-5,6,7,8-tetrahydrofolate</name>
        <dbReference type="ChEBI" id="CHEBI:57453"/>
    </ligand>
</feature>
<sequence length="320" mass="34655">MKIIFAGTPEFAATALAALLKTSHEIIAVYTQPDRKAGRGQKLTPSPVKQLALEHNIPVYQPLHFKASTEEGLAAQQELAALGADVMVVAAYGLILPQAVLDTPKYGCLNIHGSLLPRWRGAAPIQRAIATGDDETGITIMQMAAGLDTGDMMYKTYCPITSEDTSATLHDKLAAQGATAICAVLESEETLQKYLAEREVQDESLTVYAHKLVKSEARIDWSMNAVQVDRNIRAFNPWPVAFIQLDENNALRVWNSTISSQSKVNAQAGEIIAIDKQGVHVACGENTFICLTSVQWPGGKALNAQQIAQTQKLHVGQILP</sequence>
<gene>
    <name evidence="1" type="primary">fmt</name>
    <name type="ordered locus">ABAYE0022</name>
</gene>
<name>FMT_ACIBY</name>
<comment type="function">
    <text evidence="1">Attaches a formyl group to the free amino group of methionyl-tRNA(fMet). The formyl group appears to play a dual role in the initiator identity of N-formylmethionyl-tRNA by promoting its recognition by IF2 and preventing the misappropriation of this tRNA by the elongation apparatus.</text>
</comment>
<comment type="catalytic activity">
    <reaction evidence="1">
        <text>L-methionyl-tRNA(fMet) + (6R)-10-formyltetrahydrofolate = N-formyl-L-methionyl-tRNA(fMet) + (6S)-5,6,7,8-tetrahydrofolate + H(+)</text>
        <dbReference type="Rhea" id="RHEA:24380"/>
        <dbReference type="Rhea" id="RHEA-COMP:9952"/>
        <dbReference type="Rhea" id="RHEA-COMP:9953"/>
        <dbReference type="ChEBI" id="CHEBI:15378"/>
        <dbReference type="ChEBI" id="CHEBI:57453"/>
        <dbReference type="ChEBI" id="CHEBI:78530"/>
        <dbReference type="ChEBI" id="CHEBI:78844"/>
        <dbReference type="ChEBI" id="CHEBI:195366"/>
        <dbReference type="EC" id="2.1.2.9"/>
    </reaction>
</comment>
<comment type="similarity">
    <text evidence="1">Belongs to the Fmt family.</text>
</comment>